<gene>
    <name type="primary">CWC15</name>
    <name type="ordered locus">YDR163W</name>
    <name type="ORF">YD8358.17</name>
</gene>
<comment type="function">
    <text>Involved in pre-mRNA splicing.</text>
</comment>
<comment type="subunit">
    <text evidence="3">Belongs to the CWC complex (or CEF1-associated complex), a spliceosome sub-complex reminiscent of a late-stage spliceosome composed of the U2, U5 and U6 snRNAs and at least BUD13, BRR2, CDC40, CEF1, CLF1, CUS1, CWC2, CWC15, CWC21, CWC22, CWC23, CWC24, CWC25, CWC27, ECM2, HSH155, IST3, ISY1, LEA1, MSL1, NTC20, PRP8, PRP9, PRP11, PRP19, PRP21, PRP22, PRP45, PRP46, SLU7, SMB1, SMD1, SMD2, SMD3, SMX2, SMX3, SNT309, SNU114, SPP2, SYF1, SYF2, RSE1 and YJU2.</text>
</comment>
<comment type="interaction">
    <interactant intactId="EBI-36780">
        <id>Q03772</id>
    </interactant>
    <interactant intactId="EBI-476">
        <id>Q03654</id>
        <label>CEF1</label>
    </interactant>
    <organismsDiffer>false</organismsDiffer>
    <experiments>4</experiments>
</comment>
<comment type="subcellular location">
    <subcellularLocation>
        <location evidence="4">Nucleus</location>
    </subcellularLocation>
</comment>
<comment type="similarity">
    <text evidence="4">Belongs to the CWC15 family.</text>
</comment>
<sequence length="175" mass="19935">MTTSHRPQLEARSGAKAAAYTPTGIEHARLLPGHTTLKYRKFKEEENLRANCAQEDRSNDKSLEEAVMNEEKQDVVGSGNLQETRSEKDQKDSLQELLVTQKNKVEDKAELEGNEQLKGGNSSRRSWRKGTAFGRHKVTKETNIKEHATKKSASGYINDMTKSEYHQEFLHKHVR</sequence>
<name>CWC15_YEAST</name>
<dbReference type="EMBL" id="Z50046">
    <property type="protein sequence ID" value="CAA90383.1"/>
    <property type="molecule type" value="Genomic_DNA"/>
</dbReference>
<dbReference type="EMBL" id="AY557669">
    <property type="protein sequence ID" value="AAS55995.1"/>
    <property type="molecule type" value="Genomic_DNA"/>
</dbReference>
<dbReference type="EMBL" id="BK006938">
    <property type="protein sequence ID" value="DAA12003.1"/>
    <property type="molecule type" value="Genomic_DNA"/>
</dbReference>
<dbReference type="PIR" id="S57987">
    <property type="entry name" value="S57987"/>
</dbReference>
<dbReference type="RefSeq" id="NP_010447.3">
    <property type="nucleotide sequence ID" value="NM_001180470.3"/>
</dbReference>
<dbReference type="PDB" id="5GM6">
    <property type="method" value="EM"/>
    <property type="resolution" value="3.50 A"/>
    <property type="chains" value="S=1-175"/>
</dbReference>
<dbReference type="PDB" id="5GMK">
    <property type="method" value="EM"/>
    <property type="resolution" value="3.40 A"/>
    <property type="chains" value="S=1-175"/>
</dbReference>
<dbReference type="PDB" id="5LJ3">
    <property type="method" value="EM"/>
    <property type="resolution" value="3.80 A"/>
    <property type="chains" value="P=1-175"/>
</dbReference>
<dbReference type="PDB" id="5MPS">
    <property type="method" value="EM"/>
    <property type="resolution" value="3.85 A"/>
    <property type="chains" value="P=1-175"/>
</dbReference>
<dbReference type="PDB" id="5MQ0">
    <property type="method" value="EM"/>
    <property type="resolution" value="4.17 A"/>
    <property type="chains" value="P=1-175"/>
</dbReference>
<dbReference type="PDB" id="5WSG">
    <property type="method" value="EM"/>
    <property type="resolution" value="4.00 A"/>
    <property type="chains" value="S=1-175"/>
</dbReference>
<dbReference type="PDB" id="5Y88">
    <property type="method" value="EM"/>
    <property type="resolution" value="3.70 A"/>
    <property type="chains" value="P=1-175"/>
</dbReference>
<dbReference type="PDB" id="5YLZ">
    <property type="method" value="EM"/>
    <property type="resolution" value="3.60 A"/>
    <property type="chains" value="P=1-175"/>
</dbReference>
<dbReference type="PDB" id="6BK8">
    <property type="method" value="EM"/>
    <property type="resolution" value="3.30 A"/>
    <property type="chains" value="H=1-175"/>
</dbReference>
<dbReference type="PDB" id="6EXN">
    <property type="method" value="EM"/>
    <property type="resolution" value="3.70 A"/>
    <property type="chains" value="P=1-175"/>
</dbReference>
<dbReference type="PDB" id="6J6G">
    <property type="method" value="EM"/>
    <property type="resolution" value="3.20 A"/>
    <property type="chains" value="S=1-175"/>
</dbReference>
<dbReference type="PDB" id="6J6H">
    <property type="method" value="EM"/>
    <property type="resolution" value="3.60 A"/>
    <property type="chains" value="S=1-175"/>
</dbReference>
<dbReference type="PDB" id="6J6N">
    <property type="method" value="EM"/>
    <property type="resolution" value="3.86 A"/>
    <property type="chains" value="S=1-175"/>
</dbReference>
<dbReference type="PDB" id="6J6Q">
    <property type="method" value="EM"/>
    <property type="resolution" value="3.70 A"/>
    <property type="chains" value="S=1-175"/>
</dbReference>
<dbReference type="PDB" id="7DCO">
    <property type="method" value="EM"/>
    <property type="resolution" value="2.50 A"/>
    <property type="chains" value="S=1-175"/>
</dbReference>
<dbReference type="PDB" id="9DTR">
    <property type="method" value="EM"/>
    <property type="resolution" value="2.31 A"/>
    <property type="chains" value="P=1-175"/>
</dbReference>
<dbReference type="PDBsum" id="5GM6"/>
<dbReference type="PDBsum" id="5GMK"/>
<dbReference type="PDBsum" id="5LJ3"/>
<dbReference type="PDBsum" id="5MPS"/>
<dbReference type="PDBsum" id="5MQ0"/>
<dbReference type="PDBsum" id="5WSG"/>
<dbReference type="PDBsum" id="5Y88"/>
<dbReference type="PDBsum" id="5YLZ"/>
<dbReference type="PDBsum" id="6BK8"/>
<dbReference type="PDBsum" id="6EXN"/>
<dbReference type="PDBsum" id="6J6G"/>
<dbReference type="PDBsum" id="6J6H"/>
<dbReference type="PDBsum" id="6J6N"/>
<dbReference type="PDBsum" id="6J6Q"/>
<dbReference type="PDBsum" id="7DCO"/>
<dbReference type="PDBsum" id="9DTR"/>
<dbReference type="EMDB" id="EMD-0686"/>
<dbReference type="EMDB" id="EMD-0687"/>
<dbReference type="EMDB" id="EMD-0691"/>
<dbReference type="EMDB" id="EMD-0692"/>
<dbReference type="EMDB" id="EMD-30637"/>
<dbReference type="EMDB" id="EMD-3539"/>
<dbReference type="EMDB" id="EMD-3541"/>
<dbReference type="EMDB" id="EMD-3979"/>
<dbReference type="EMDB" id="EMD-47157"/>
<dbReference type="EMDB" id="EMD-6817"/>
<dbReference type="EMDB" id="EMD-6839"/>
<dbReference type="EMDB" id="EMD-7109"/>
<dbReference type="EMDB" id="EMD-9524"/>
<dbReference type="EMDB" id="EMD-9525"/>
<dbReference type="SMR" id="Q03772"/>
<dbReference type="BioGRID" id="32214">
    <property type="interactions" value="160"/>
</dbReference>
<dbReference type="ComplexPortal" id="CPX-1651">
    <property type="entry name" value="PRP19-associated complex"/>
</dbReference>
<dbReference type="FunCoup" id="Q03772">
    <property type="interactions" value="200"/>
</dbReference>
<dbReference type="IntAct" id="Q03772">
    <property type="interactions" value="45"/>
</dbReference>
<dbReference type="STRING" id="4932.YDR163W"/>
<dbReference type="iPTMnet" id="Q03772"/>
<dbReference type="PaxDb" id="4932-YDR163W"/>
<dbReference type="PeptideAtlas" id="Q03772"/>
<dbReference type="EnsemblFungi" id="YDR163W_mRNA">
    <property type="protein sequence ID" value="YDR163W"/>
    <property type="gene ID" value="YDR163W"/>
</dbReference>
<dbReference type="GeneID" id="851741"/>
<dbReference type="KEGG" id="sce:YDR163W"/>
<dbReference type="AGR" id="SGD:S000002570"/>
<dbReference type="SGD" id="S000002570">
    <property type="gene designation" value="CWC15"/>
</dbReference>
<dbReference type="VEuPathDB" id="FungiDB:YDR163W"/>
<dbReference type="eggNOG" id="KOG3228">
    <property type="taxonomic scope" value="Eukaryota"/>
</dbReference>
<dbReference type="HOGENOM" id="CLU_100667_0_0_1"/>
<dbReference type="InParanoid" id="Q03772"/>
<dbReference type="OMA" id="NIKEHAT"/>
<dbReference type="OrthoDB" id="30179at2759"/>
<dbReference type="BioCyc" id="YEAST:G3O-29753-MONOMER"/>
<dbReference type="BioGRID-ORCS" id="851741">
    <property type="hits" value="0 hits in 10 CRISPR screens"/>
</dbReference>
<dbReference type="PRO" id="PR:Q03772"/>
<dbReference type="Proteomes" id="UP000002311">
    <property type="component" value="Chromosome IV"/>
</dbReference>
<dbReference type="RNAct" id="Q03772">
    <property type="molecule type" value="protein"/>
</dbReference>
<dbReference type="GO" id="GO:0071013">
    <property type="term" value="C:catalytic step 2 spliceosome"/>
    <property type="evidence" value="ECO:0000318"/>
    <property type="project" value="GO_Central"/>
</dbReference>
<dbReference type="GO" id="GO:0005634">
    <property type="term" value="C:nucleus"/>
    <property type="evidence" value="ECO:0000250"/>
    <property type="project" value="UniProtKB"/>
</dbReference>
<dbReference type="GO" id="GO:0000974">
    <property type="term" value="C:Prp19 complex"/>
    <property type="evidence" value="ECO:0000353"/>
    <property type="project" value="ComplexPortal"/>
</dbReference>
<dbReference type="GO" id="GO:0005684">
    <property type="term" value="C:U2-type spliceosomal complex"/>
    <property type="evidence" value="ECO:0000314"/>
    <property type="project" value="SGD"/>
</dbReference>
<dbReference type="GO" id="GO:0003723">
    <property type="term" value="F:RNA binding"/>
    <property type="evidence" value="ECO:0000250"/>
    <property type="project" value="UniProtKB"/>
</dbReference>
<dbReference type="GO" id="GO:0045292">
    <property type="term" value="P:mRNA cis splicing, via spliceosome"/>
    <property type="evidence" value="ECO:0000318"/>
    <property type="project" value="GO_Central"/>
</dbReference>
<dbReference type="GO" id="GO:0000398">
    <property type="term" value="P:mRNA splicing, via spliceosome"/>
    <property type="evidence" value="ECO:0000316"/>
    <property type="project" value="SGD"/>
</dbReference>
<dbReference type="InterPro" id="IPR006973">
    <property type="entry name" value="Cwf_Cwc_15"/>
</dbReference>
<dbReference type="PANTHER" id="PTHR12718">
    <property type="entry name" value="CELL CYCLE CONTROL PROTEIN CWF15"/>
    <property type="match status" value="1"/>
</dbReference>
<dbReference type="PANTHER" id="PTHR12718:SF2">
    <property type="entry name" value="SPLICEOSOME-ASSOCIATED PROTEIN CWC15 HOMOLOG"/>
    <property type="match status" value="1"/>
</dbReference>
<dbReference type="Pfam" id="PF04889">
    <property type="entry name" value="Cwf_Cwc_15"/>
    <property type="match status" value="1"/>
</dbReference>
<protein>
    <recommendedName>
        <fullName>Pre-mRNA-splicing factor CWC15</fullName>
    </recommendedName>
    <alternativeName>
        <fullName>Complexed with CEF1 protein 15</fullName>
    </alternativeName>
</protein>
<feature type="chain" id="PRO_0000218244" description="Pre-mRNA-splicing factor CWC15">
    <location>
        <begin position="1"/>
        <end position="175"/>
    </location>
</feature>
<feature type="region of interest" description="Disordered" evidence="2">
    <location>
        <begin position="1"/>
        <end position="20"/>
    </location>
</feature>
<feature type="region of interest" description="Disordered" evidence="2">
    <location>
        <begin position="53"/>
        <end position="159"/>
    </location>
</feature>
<feature type="coiled-coil region" evidence="1">
    <location>
        <begin position="85"/>
        <end position="110"/>
    </location>
</feature>
<feature type="compositionally biased region" description="Basic and acidic residues" evidence="2">
    <location>
        <begin position="53"/>
        <end position="74"/>
    </location>
</feature>
<feature type="compositionally biased region" description="Basic and acidic residues" evidence="2">
    <location>
        <begin position="84"/>
        <end position="94"/>
    </location>
</feature>
<feature type="compositionally biased region" description="Basic and acidic residues" evidence="2">
    <location>
        <begin position="139"/>
        <end position="149"/>
    </location>
</feature>
<feature type="helix" evidence="5">
    <location>
        <begin position="14"/>
        <end position="19"/>
    </location>
</feature>
<feature type="helix" evidence="5">
    <location>
        <begin position="28"/>
        <end position="30"/>
    </location>
</feature>
<feature type="strand" evidence="5">
    <location>
        <begin position="129"/>
        <end position="134"/>
    </location>
</feature>
<feature type="helix" evidence="5">
    <location>
        <begin position="160"/>
        <end position="162"/>
    </location>
</feature>
<feature type="helix" evidence="5">
    <location>
        <begin position="164"/>
        <end position="173"/>
    </location>
</feature>
<proteinExistence type="evidence at protein level"/>
<accession>Q03772</accession>
<accession>D6VSE3</accession>
<evidence type="ECO:0000255" key="1"/>
<evidence type="ECO:0000256" key="2">
    <source>
        <dbReference type="SAM" id="MobiDB-lite"/>
    </source>
</evidence>
<evidence type="ECO:0000269" key="3">
    <source>
    </source>
</evidence>
<evidence type="ECO:0000305" key="4"/>
<evidence type="ECO:0007829" key="5">
    <source>
        <dbReference type="PDB" id="9DTR"/>
    </source>
</evidence>
<reference key="1">
    <citation type="journal article" date="1997" name="Nature">
        <title>The nucleotide sequence of Saccharomyces cerevisiae chromosome IV.</title>
        <authorList>
            <person name="Jacq C."/>
            <person name="Alt-Moerbe J."/>
            <person name="Andre B."/>
            <person name="Arnold W."/>
            <person name="Bahr A."/>
            <person name="Ballesta J.P.G."/>
            <person name="Bargues M."/>
            <person name="Baron L."/>
            <person name="Becker A."/>
            <person name="Biteau N."/>
            <person name="Bloecker H."/>
            <person name="Blugeon C."/>
            <person name="Boskovic J."/>
            <person name="Brandt P."/>
            <person name="Brueckner M."/>
            <person name="Buitrago M.J."/>
            <person name="Coster F."/>
            <person name="Delaveau T."/>
            <person name="del Rey F."/>
            <person name="Dujon B."/>
            <person name="Eide L.G."/>
            <person name="Garcia-Cantalejo J.M."/>
            <person name="Goffeau A."/>
            <person name="Gomez-Peris A."/>
            <person name="Granotier C."/>
            <person name="Hanemann V."/>
            <person name="Hankeln T."/>
            <person name="Hoheisel J.D."/>
            <person name="Jaeger W."/>
            <person name="Jimenez A."/>
            <person name="Jonniaux J.-L."/>
            <person name="Kraemer C."/>
            <person name="Kuester H."/>
            <person name="Laamanen P."/>
            <person name="Legros Y."/>
            <person name="Louis E.J."/>
            <person name="Moeller-Rieker S."/>
            <person name="Monnet A."/>
            <person name="Moro M."/>
            <person name="Mueller-Auer S."/>
            <person name="Nussbaumer B."/>
            <person name="Paricio N."/>
            <person name="Paulin L."/>
            <person name="Perea J."/>
            <person name="Perez-Alonso M."/>
            <person name="Perez-Ortin J.E."/>
            <person name="Pohl T.M."/>
            <person name="Prydz H."/>
            <person name="Purnelle B."/>
            <person name="Rasmussen S.W."/>
            <person name="Remacha M.A."/>
            <person name="Revuelta J.L."/>
            <person name="Rieger M."/>
            <person name="Salom D."/>
            <person name="Saluz H.P."/>
            <person name="Saiz J.E."/>
            <person name="Saren A.-M."/>
            <person name="Schaefer M."/>
            <person name="Scharfe M."/>
            <person name="Schmidt E.R."/>
            <person name="Schneider C."/>
            <person name="Scholler P."/>
            <person name="Schwarz S."/>
            <person name="Soler-Mira A."/>
            <person name="Urrestarazu L.A."/>
            <person name="Verhasselt P."/>
            <person name="Vissers S."/>
            <person name="Voet M."/>
            <person name="Volckaert G."/>
            <person name="Wagner G."/>
            <person name="Wambutt R."/>
            <person name="Wedler E."/>
            <person name="Wedler H."/>
            <person name="Woelfl S."/>
            <person name="Harris D.E."/>
            <person name="Bowman S."/>
            <person name="Brown D."/>
            <person name="Churcher C.M."/>
            <person name="Connor R."/>
            <person name="Dedman K."/>
            <person name="Gentles S."/>
            <person name="Hamlin N."/>
            <person name="Hunt S."/>
            <person name="Jones L."/>
            <person name="McDonald S."/>
            <person name="Murphy L.D."/>
            <person name="Niblett D."/>
            <person name="Odell C."/>
            <person name="Oliver K."/>
            <person name="Rajandream M.A."/>
            <person name="Richards C."/>
            <person name="Shore L."/>
            <person name="Walsh S.V."/>
            <person name="Barrell B.G."/>
            <person name="Dietrich F.S."/>
            <person name="Mulligan J.T."/>
            <person name="Allen E."/>
            <person name="Araujo R."/>
            <person name="Aviles E."/>
            <person name="Berno A."/>
            <person name="Carpenter J."/>
            <person name="Chen E."/>
            <person name="Cherry J.M."/>
            <person name="Chung E."/>
            <person name="Duncan M."/>
            <person name="Hunicke-Smith S."/>
            <person name="Hyman R.W."/>
            <person name="Komp C."/>
            <person name="Lashkari D."/>
            <person name="Lew H."/>
            <person name="Lin D."/>
            <person name="Mosedale D."/>
            <person name="Nakahara K."/>
            <person name="Namath A."/>
            <person name="Oefner P."/>
            <person name="Oh C."/>
            <person name="Petel F.X."/>
            <person name="Roberts D."/>
            <person name="Schramm S."/>
            <person name="Schroeder M."/>
            <person name="Shogren T."/>
            <person name="Shroff N."/>
            <person name="Winant A."/>
            <person name="Yelton M.A."/>
            <person name="Botstein D."/>
            <person name="Davis R.W."/>
            <person name="Johnston M."/>
            <person name="Andrews S."/>
            <person name="Brinkman R."/>
            <person name="Cooper J."/>
            <person name="Ding H."/>
            <person name="Du Z."/>
            <person name="Favello A."/>
            <person name="Fulton L."/>
            <person name="Gattung S."/>
            <person name="Greco T."/>
            <person name="Hallsworth K."/>
            <person name="Hawkins J."/>
            <person name="Hillier L.W."/>
            <person name="Jier M."/>
            <person name="Johnson D."/>
            <person name="Johnston L."/>
            <person name="Kirsten J."/>
            <person name="Kucaba T."/>
            <person name="Langston Y."/>
            <person name="Latreille P."/>
            <person name="Le T."/>
            <person name="Mardis E."/>
            <person name="Menezes S."/>
            <person name="Miller N."/>
            <person name="Nhan M."/>
            <person name="Pauley A."/>
            <person name="Peluso D."/>
            <person name="Rifkin L."/>
            <person name="Riles L."/>
            <person name="Taich A."/>
            <person name="Trevaskis E."/>
            <person name="Vignati D."/>
            <person name="Wilcox L."/>
            <person name="Wohldman P."/>
            <person name="Vaudin M."/>
            <person name="Wilson R."/>
            <person name="Waterston R."/>
            <person name="Albermann K."/>
            <person name="Hani J."/>
            <person name="Heumann K."/>
            <person name="Kleine K."/>
            <person name="Mewes H.-W."/>
            <person name="Zollner A."/>
            <person name="Zaccaria P."/>
        </authorList>
    </citation>
    <scope>NUCLEOTIDE SEQUENCE [LARGE SCALE GENOMIC DNA]</scope>
    <source>
        <strain>ATCC 204508 / S288c</strain>
    </source>
</reference>
<reference key="2">
    <citation type="journal article" date="2014" name="G3 (Bethesda)">
        <title>The reference genome sequence of Saccharomyces cerevisiae: Then and now.</title>
        <authorList>
            <person name="Engel S.R."/>
            <person name="Dietrich F.S."/>
            <person name="Fisk D.G."/>
            <person name="Binkley G."/>
            <person name="Balakrishnan R."/>
            <person name="Costanzo M.C."/>
            <person name="Dwight S.S."/>
            <person name="Hitz B.C."/>
            <person name="Karra K."/>
            <person name="Nash R.S."/>
            <person name="Weng S."/>
            <person name="Wong E.D."/>
            <person name="Lloyd P."/>
            <person name="Skrzypek M.S."/>
            <person name="Miyasato S.R."/>
            <person name="Simison M."/>
            <person name="Cherry J.M."/>
        </authorList>
    </citation>
    <scope>GENOME REANNOTATION</scope>
    <source>
        <strain>ATCC 204508 / S288c</strain>
    </source>
</reference>
<reference key="3">
    <citation type="journal article" date="2007" name="Genome Res.">
        <title>Approaching a complete repository of sequence-verified protein-encoding clones for Saccharomyces cerevisiae.</title>
        <authorList>
            <person name="Hu Y."/>
            <person name="Rolfs A."/>
            <person name="Bhullar B."/>
            <person name="Murthy T.V.S."/>
            <person name="Zhu C."/>
            <person name="Berger M.F."/>
            <person name="Camargo A.A."/>
            <person name="Kelley F."/>
            <person name="McCarron S."/>
            <person name="Jepson D."/>
            <person name="Richardson A."/>
            <person name="Raphael J."/>
            <person name="Moreira D."/>
            <person name="Taycher E."/>
            <person name="Zuo D."/>
            <person name="Mohr S."/>
            <person name="Kane M.F."/>
            <person name="Williamson J."/>
            <person name="Simpson A.J.G."/>
            <person name="Bulyk M.L."/>
            <person name="Harlow E."/>
            <person name="Marsischky G."/>
            <person name="Kolodner R.D."/>
            <person name="LaBaer J."/>
        </authorList>
    </citation>
    <scope>NUCLEOTIDE SEQUENCE [GENOMIC DNA]</scope>
    <source>
        <strain>ATCC 204508 / S288c</strain>
    </source>
</reference>
<reference key="4">
    <citation type="journal article" date="2002" name="Mol. Cell. Biol.">
        <title>Proteomics analysis reveals stable multiprotein complexes in both fission and budding yeasts containing Myb-related Cdc5p/Cef1p, novel pre-mRNA splicing factors, and snRNAs.</title>
        <authorList>
            <person name="Ohi M.D."/>
            <person name="Link A.J."/>
            <person name="Ren L."/>
            <person name="Jennings J.L."/>
            <person name="McDonald W.H."/>
            <person name="Gould K.L."/>
        </authorList>
    </citation>
    <scope>IDENTIFICATION IN THE CWC COMPLEX</scope>
    <scope>IDENTIFICATION BY MASS SPECTROMETRY</scope>
</reference>
<keyword id="KW-0002">3D-structure</keyword>
<keyword id="KW-0175">Coiled coil</keyword>
<keyword id="KW-0507">mRNA processing</keyword>
<keyword id="KW-0508">mRNA splicing</keyword>
<keyword id="KW-0539">Nucleus</keyword>
<keyword id="KW-1185">Reference proteome</keyword>
<keyword id="KW-0747">Spliceosome</keyword>
<organism>
    <name type="scientific">Saccharomyces cerevisiae (strain ATCC 204508 / S288c)</name>
    <name type="common">Baker's yeast</name>
    <dbReference type="NCBI Taxonomy" id="559292"/>
    <lineage>
        <taxon>Eukaryota</taxon>
        <taxon>Fungi</taxon>
        <taxon>Dikarya</taxon>
        <taxon>Ascomycota</taxon>
        <taxon>Saccharomycotina</taxon>
        <taxon>Saccharomycetes</taxon>
        <taxon>Saccharomycetales</taxon>
        <taxon>Saccharomycetaceae</taxon>
        <taxon>Saccharomyces</taxon>
    </lineage>
</organism>